<organism>
    <name type="scientific">Arabidopsis thaliana</name>
    <name type="common">Mouse-ear cress</name>
    <dbReference type="NCBI Taxonomy" id="3702"/>
    <lineage>
        <taxon>Eukaryota</taxon>
        <taxon>Viridiplantae</taxon>
        <taxon>Streptophyta</taxon>
        <taxon>Embryophyta</taxon>
        <taxon>Tracheophyta</taxon>
        <taxon>Spermatophyta</taxon>
        <taxon>Magnoliopsida</taxon>
        <taxon>eudicotyledons</taxon>
        <taxon>Gunneridae</taxon>
        <taxon>Pentapetalae</taxon>
        <taxon>rosids</taxon>
        <taxon>malvids</taxon>
        <taxon>Brassicales</taxon>
        <taxon>Brassicaceae</taxon>
        <taxon>Camelineae</taxon>
        <taxon>Arabidopsis</taxon>
    </lineage>
</organism>
<protein>
    <recommendedName>
        <fullName>Polyadenylate-binding protein-interacting protein 5</fullName>
        <shortName>PABP-interacting protein 5</shortName>
        <shortName>Poly(A)-binding protein-interacting protein 5</shortName>
    </recommendedName>
    <alternativeName>
        <fullName>PAM2-containing protein CID5</fullName>
    </alternativeName>
    <alternativeName>
        <fullName>Protein CTC-INTERACTING DOMAIN 5</fullName>
    </alternativeName>
    <alternativeName>
        <fullName>Protein INCREASED POLYPLOIDY LEVEL IN DARKNESS 1</fullName>
    </alternativeName>
</protein>
<gene>
    <name type="primary">CID5</name>
    <name type="synonym">IPD1</name>
    <name type="ordered locus">At5g11440</name>
    <name type="ORF">F15N18_30</name>
</gene>
<name>CID5_ARATH</name>
<accession>Q9LYE5</accession>
<proteinExistence type="evidence at transcript level"/>
<reference key="1">
    <citation type="journal article" date="2000" name="Nature">
        <title>Sequence and analysis of chromosome 5 of the plant Arabidopsis thaliana.</title>
        <authorList>
            <person name="Tabata S."/>
            <person name="Kaneko T."/>
            <person name="Nakamura Y."/>
            <person name="Kotani H."/>
            <person name="Kato T."/>
            <person name="Asamizu E."/>
            <person name="Miyajima N."/>
            <person name="Sasamoto S."/>
            <person name="Kimura T."/>
            <person name="Hosouchi T."/>
            <person name="Kawashima K."/>
            <person name="Kohara M."/>
            <person name="Matsumoto M."/>
            <person name="Matsuno A."/>
            <person name="Muraki A."/>
            <person name="Nakayama S."/>
            <person name="Nakazaki N."/>
            <person name="Naruo K."/>
            <person name="Okumura S."/>
            <person name="Shinpo S."/>
            <person name="Takeuchi C."/>
            <person name="Wada T."/>
            <person name="Watanabe A."/>
            <person name="Yamada M."/>
            <person name="Yasuda M."/>
            <person name="Sato S."/>
            <person name="de la Bastide M."/>
            <person name="Huang E."/>
            <person name="Spiegel L."/>
            <person name="Gnoj L."/>
            <person name="O'Shaughnessy A."/>
            <person name="Preston R."/>
            <person name="Habermann K."/>
            <person name="Murray J."/>
            <person name="Johnson D."/>
            <person name="Rohlfing T."/>
            <person name="Nelson J."/>
            <person name="Stoneking T."/>
            <person name="Pepin K."/>
            <person name="Spieth J."/>
            <person name="Sekhon M."/>
            <person name="Armstrong J."/>
            <person name="Becker M."/>
            <person name="Belter E."/>
            <person name="Cordum H."/>
            <person name="Cordes M."/>
            <person name="Courtney L."/>
            <person name="Courtney W."/>
            <person name="Dante M."/>
            <person name="Du H."/>
            <person name="Edwards J."/>
            <person name="Fryman J."/>
            <person name="Haakensen B."/>
            <person name="Lamar E."/>
            <person name="Latreille P."/>
            <person name="Leonard S."/>
            <person name="Meyer R."/>
            <person name="Mulvaney E."/>
            <person name="Ozersky P."/>
            <person name="Riley A."/>
            <person name="Strowmatt C."/>
            <person name="Wagner-McPherson C."/>
            <person name="Wollam A."/>
            <person name="Yoakum M."/>
            <person name="Bell M."/>
            <person name="Dedhia N."/>
            <person name="Parnell L."/>
            <person name="Shah R."/>
            <person name="Rodriguez M."/>
            <person name="Hoon See L."/>
            <person name="Vil D."/>
            <person name="Baker J."/>
            <person name="Kirchoff K."/>
            <person name="Toth K."/>
            <person name="King L."/>
            <person name="Bahret A."/>
            <person name="Miller B."/>
            <person name="Marra M.A."/>
            <person name="Martienssen R."/>
            <person name="McCombie W.R."/>
            <person name="Wilson R.K."/>
            <person name="Murphy G."/>
            <person name="Bancroft I."/>
            <person name="Volckaert G."/>
            <person name="Wambutt R."/>
            <person name="Duesterhoeft A."/>
            <person name="Stiekema W."/>
            <person name="Pohl T."/>
            <person name="Entian K.-D."/>
            <person name="Terryn N."/>
            <person name="Hartley N."/>
            <person name="Bent E."/>
            <person name="Johnson S."/>
            <person name="Langham S.-A."/>
            <person name="McCullagh B."/>
            <person name="Robben J."/>
            <person name="Grymonprez B."/>
            <person name="Zimmermann W."/>
            <person name="Ramsperger U."/>
            <person name="Wedler H."/>
            <person name="Balke K."/>
            <person name="Wedler E."/>
            <person name="Peters S."/>
            <person name="van Staveren M."/>
            <person name="Dirkse W."/>
            <person name="Mooijman P."/>
            <person name="Klein Lankhorst R."/>
            <person name="Weitzenegger T."/>
            <person name="Bothe G."/>
            <person name="Rose M."/>
            <person name="Hauf J."/>
            <person name="Berneiser S."/>
            <person name="Hempel S."/>
            <person name="Feldpausch M."/>
            <person name="Lamberth S."/>
            <person name="Villarroel R."/>
            <person name="Gielen J."/>
            <person name="Ardiles W."/>
            <person name="Bents O."/>
            <person name="Lemcke K."/>
            <person name="Kolesov G."/>
            <person name="Mayer K.F.X."/>
            <person name="Rudd S."/>
            <person name="Schoof H."/>
            <person name="Schueller C."/>
            <person name="Zaccaria P."/>
            <person name="Mewes H.-W."/>
            <person name="Bevan M."/>
            <person name="Fransz P.F."/>
        </authorList>
    </citation>
    <scope>NUCLEOTIDE SEQUENCE [LARGE SCALE GENOMIC DNA]</scope>
    <source>
        <strain>cv. Columbia</strain>
    </source>
</reference>
<reference key="2">
    <citation type="journal article" date="2017" name="Plant J.">
        <title>Araport11: a complete reannotation of the Arabidopsis thaliana reference genome.</title>
        <authorList>
            <person name="Cheng C.Y."/>
            <person name="Krishnakumar V."/>
            <person name="Chan A.P."/>
            <person name="Thibaud-Nissen F."/>
            <person name="Schobel S."/>
            <person name="Town C.D."/>
        </authorList>
    </citation>
    <scope>GENOME REANNOTATION</scope>
    <source>
        <strain>cv. Columbia</strain>
    </source>
</reference>
<reference key="3">
    <citation type="submission" date="2004-08" db="EMBL/GenBank/DDBJ databases">
        <title>Reconstruction of cDNA sequences for hypothetical genes in Arabidopsis thaliana from 5' and 3' RACE products.</title>
        <authorList>
            <person name="Xiao Y.-L."/>
            <person name="Underwood B.A."/>
            <person name="Moskal W.A. Jr."/>
            <person name="Wang W."/>
            <person name="Redman J.C."/>
            <person name="Wu H.C."/>
            <person name="Utterback T."/>
            <person name="Town C.D."/>
        </authorList>
    </citation>
    <scope>NUCLEOTIDE SEQUENCE [LARGE SCALE MRNA]</scope>
    <source>
        <strain>cv. Columbia</strain>
    </source>
</reference>
<reference key="4">
    <citation type="journal article" date="2005" name="Mol. Genet. Genomics">
        <title>Four distinct classes of proteins as interaction partners of the PABC domain of Arabidopsis thaliana Poly(A)-binding proteins.</title>
        <authorList>
            <person name="Bravo J."/>
            <person name="Aguilar-Henonin L."/>
            <person name="Olmedo G."/>
            <person name="Guzman P."/>
        </authorList>
    </citation>
    <scope>GENE FAMILY</scope>
    <scope>PAM2 MOTIF</scope>
    <scope>TISSUE SPECIFICITY</scope>
</reference>
<reference key="5">
    <citation type="journal article" date="2006" name="Plant Mol. Biol.">
        <title>Light-dependent polyploidy control by a CUE protein variant in Arabidopsis.</title>
        <authorList>
            <person name="Tsumoto Y."/>
            <person name="Yoshizumi T."/>
            <person name="Kuroda H."/>
            <person name="Kawashima M."/>
            <person name="Ichikawa T."/>
            <person name="Nakazawa M."/>
            <person name="Yamamoto N."/>
            <person name="Matsui M."/>
        </authorList>
    </citation>
    <scope>FUNCTION</scope>
    <scope>DEVELOPMENTAL STAGE</scope>
</reference>
<dbReference type="EMBL" id="AL163815">
    <property type="protein sequence ID" value="CAB87704.1"/>
    <property type="molecule type" value="Genomic_DNA"/>
</dbReference>
<dbReference type="EMBL" id="CP002688">
    <property type="protein sequence ID" value="AED91680.1"/>
    <property type="molecule type" value="Genomic_DNA"/>
</dbReference>
<dbReference type="EMBL" id="CP002688">
    <property type="protein sequence ID" value="ANM69811.1"/>
    <property type="molecule type" value="Genomic_DNA"/>
</dbReference>
<dbReference type="EMBL" id="AY735675">
    <property type="protein sequence ID" value="AAU44545.1"/>
    <property type="molecule type" value="mRNA"/>
</dbReference>
<dbReference type="EMBL" id="AY773894">
    <property type="protein sequence ID" value="AAV63923.1"/>
    <property type="molecule type" value="mRNA"/>
</dbReference>
<dbReference type="PIR" id="T48503">
    <property type="entry name" value="T48503"/>
</dbReference>
<dbReference type="RefSeq" id="NP_001331464.1">
    <property type="nucleotide sequence ID" value="NM_001343191.1"/>
</dbReference>
<dbReference type="RefSeq" id="NP_196705.1">
    <property type="nucleotide sequence ID" value="NM_121182.3"/>
</dbReference>
<dbReference type="SMR" id="Q9LYE5"/>
<dbReference type="BioGRID" id="16293">
    <property type="interactions" value="2"/>
</dbReference>
<dbReference type="IntAct" id="Q9LYE5">
    <property type="interactions" value="2"/>
</dbReference>
<dbReference type="STRING" id="3702.Q9LYE5"/>
<dbReference type="PaxDb" id="3702-AT5G11440.1"/>
<dbReference type="ProteomicsDB" id="246907"/>
<dbReference type="EnsemblPlants" id="AT5G11440.1">
    <property type="protein sequence ID" value="AT5G11440.1"/>
    <property type="gene ID" value="AT5G11440"/>
</dbReference>
<dbReference type="EnsemblPlants" id="AT5G11440.2">
    <property type="protein sequence ID" value="AT5G11440.2"/>
    <property type="gene ID" value="AT5G11440"/>
</dbReference>
<dbReference type="GeneID" id="831015"/>
<dbReference type="Gramene" id="AT5G11440.1">
    <property type="protein sequence ID" value="AT5G11440.1"/>
    <property type="gene ID" value="AT5G11440"/>
</dbReference>
<dbReference type="Gramene" id="AT5G11440.2">
    <property type="protein sequence ID" value="AT5G11440.2"/>
    <property type="gene ID" value="AT5G11440"/>
</dbReference>
<dbReference type="KEGG" id="ath:AT5G11440"/>
<dbReference type="Araport" id="AT5G11440"/>
<dbReference type="TAIR" id="AT5G11440">
    <property type="gene designation" value="CID5"/>
</dbReference>
<dbReference type="eggNOG" id="ENOG502S2Y2">
    <property type="taxonomic scope" value="Eukaryota"/>
</dbReference>
<dbReference type="HOGENOM" id="CLU_123587_0_0_1"/>
<dbReference type="InParanoid" id="Q9LYE5"/>
<dbReference type="PhylomeDB" id="Q9LYE5"/>
<dbReference type="PRO" id="PR:Q9LYE5"/>
<dbReference type="Proteomes" id="UP000006548">
    <property type="component" value="Chromosome 5"/>
</dbReference>
<dbReference type="ExpressionAtlas" id="Q9LYE5">
    <property type="expression patterns" value="baseline and differential"/>
</dbReference>
<dbReference type="GO" id="GO:0043130">
    <property type="term" value="F:ubiquitin binding"/>
    <property type="evidence" value="ECO:0007669"/>
    <property type="project" value="InterPro"/>
</dbReference>
<dbReference type="CDD" id="cd14371">
    <property type="entry name" value="CUE_CID7_like"/>
    <property type="match status" value="1"/>
</dbReference>
<dbReference type="Gene3D" id="1.10.8.10">
    <property type="entry name" value="DNA helicase RuvA subunit, C-terminal domain"/>
    <property type="match status" value="1"/>
</dbReference>
<dbReference type="InterPro" id="IPR041806">
    <property type="entry name" value="CID5/6/7_CUE"/>
</dbReference>
<dbReference type="InterPro" id="IPR038981">
    <property type="entry name" value="CID5/CID6"/>
</dbReference>
<dbReference type="InterPro" id="IPR003892">
    <property type="entry name" value="CUE"/>
</dbReference>
<dbReference type="PANTHER" id="PTHR37252:SF2">
    <property type="entry name" value="POLYADENYLATE-BINDING PROTEIN-INTERACTING PROTEIN 5"/>
    <property type="match status" value="1"/>
</dbReference>
<dbReference type="PANTHER" id="PTHR37252">
    <property type="entry name" value="POLYADENYLATE-BINDING PROTEIN-INTERACTING PROTEIN 6"/>
    <property type="match status" value="1"/>
</dbReference>
<dbReference type="PROSITE" id="PS51140">
    <property type="entry name" value="CUE"/>
    <property type="match status" value="1"/>
</dbReference>
<keyword id="KW-1185">Reference proteome</keyword>
<feature type="chain" id="PRO_0000428896" description="Polyadenylate-binding protein-interacting protein 5">
    <location>
        <begin position="1"/>
        <end position="155"/>
    </location>
</feature>
<feature type="domain" description="CUE" evidence="1">
    <location>
        <begin position="66"/>
        <end position="109"/>
    </location>
</feature>
<feature type="region of interest" description="Disordered" evidence="2">
    <location>
        <begin position="114"/>
        <end position="155"/>
    </location>
</feature>
<feature type="short sequence motif" description="PAM2-like">
    <location>
        <begin position="7"/>
        <end position="17"/>
    </location>
</feature>
<feature type="compositionally biased region" description="Polar residues" evidence="2">
    <location>
        <begin position="130"/>
        <end position="148"/>
    </location>
</feature>
<sequence length="155" mass="16560">MKPGAFALNPHAASYVPISKRVDYGGGDDGLVFAAKSPTVEVSMPKKSSEMAYKQIRDDDLDLEMDIDMDIEYLLVTFSGLSQESITDVYLANGGDLEATIEMLNQLEIYSTESEENLPETLDIGDISESGPSTSKSTEVAASTSSVIPNAPVSA</sequence>
<evidence type="ECO:0000255" key="1">
    <source>
        <dbReference type="PROSITE-ProRule" id="PRU00468"/>
    </source>
</evidence>
<evidence type="ECO:0000256" key="2">
    <source>
        <dbReference type="SAM" id="MobiDB-lite"/>
    </source>
</evidence>
<evidence type="ECO:0000269" key="3">
    <source>
    </source>
</evidence>
<evidence type="ECO:0000269" key="4">
    <source>
    </source>
</evidence>
<comment type="function">
    <text evidence="4">Promotes polyploidy in dark-grown seedlings. Regulates the endocycle leading to hypocotyl elongation.</text>
</comment>
<comment type="tissue specificity">
    <text evidence="3">Specifically expressed in immature siliques.</text>
</comment>
<comment type="developmental stage">
    <text evidence="4">Specifically expressed in mitotically dividing cells of seedlings.</text>
</comment>
<comment type="domain">
    <text>Contains a PAM2-like motif, which seems to be involved in the binding to the PABC/CTC domain of PAB proteins.</text>
</comment>
<comment type="miscellaneous">
    <text>Overexpression of CID5/IPD1 leads to increased ploidy levels and longer hypocotyls in dark-grown seedlings compared to wild-type.</text>
</comment>